<reference key="1">
    <citation type="submission" date="2006-09" db="EMBL/GenBank/DDBJ databases">
        <title>NISC comparative sequencing initiative.</title>
        <authorList>
            <person name="Antonellis A."/>
            <person name="Ayele K."/>
            <person name="Benjamin B."/>
            <person name="Blakesley R.W."/>
            <person name="Boakye A."/>
            <person name="Bouffard G.G."/>
            <person name="Brinkley C."/>
            <person name="Brooks S."/>
            <person name="Chu G."/>
            <person name="Coleman H."/>
            <person name="Engle J."/>
            <person name="Gestole M."/>
            <person name="Greene A."/>
            <person name="Guan X."/>
            <person name="Gupta J."/>
            <person name="Haghighi P."/>
            <person name="Han J."/>
            <person name="Hansen N."/>
            <person name="Ho S.-L."/>
            <person name="Hu P."/>
            <person name="Hunter G."/>
            <person name="Hurle B."/>
            <person name="Idol J.R."/>
            <person name="Kwong P."/>
            <person name="Laric P."/>
            <person name="Larson S."/>
            <person name="Lee-Lin S.-Q."/>
            <person name="Legaspi R."/>
            <person name="Madden M."/>
            <person name="Maduro Q.L."/>
            <person name="Maduro V.B."/>
            <person name="Margulies E.H."/>
            <person name="Masiello C."/>
            <person name="Maskeri B."/>
            <person name="McDowell J."/>
            <person name="Mojidi H.A."/>
            <person name="Mullikin J.C."/>
            <person name="Oestreicher J.S."/>
            <person name="Park M."/>
            <person name="Portnoy M.E."/>
            <person name="Prasad A."/>
            <person name="Puri O."/>
            <person name="Reddix-Dugue N."/>
            <person name="Schandler K."/>
            <person name="Schueler M.G."/>
            <person name="Sison C."/>
            <person name="Stantripop S."/>
            <person name="Stephen E."/>
            <person name="Taye A."/>
            <person name="Thomas J.W."/>
            <person name="Thomas P.J."/>
            <person name="Tsipouri V."/>
            <person name="Ung L."/>
            <person name="Vogt J.L."/>
            <person name="Wetherby K.D."/>
            <person name="Young A."/>
            <person name="Green E.D."/>
        </authorList>
    </citation>
    <scope>NUCLEOTIDE SEQUENCE [LARGE SCALE GENOMIC DNA]</scope>
</reference>
<comment type="subcellular location">
    <subcellularLocation>
        <location evidence="3">Membrane</location>
        <topology evidence="3">Multi-pass membrane protein</topology>
    </subcellularLocation>
</comment>
<comment type="similarity">
    <text evidence="3">Belongs to the ST7 family.</text>
</comment>
<name>ST7_SHEEP</name>
<accession>Q09YI5</accession>
<keyword id="KW-0325">Glycoprotein</keyword>
<keyword id="KW-0472">Membrane</keyword>
<keyword id="KW-0597">Phosphoprotein</keyword>
<keyword id="KW-1185">Reference proteome</keyword>
<keyword id="KW-0812">Transmembrane</keyword>
<keyword id="KW-1133">Transmembrane helix</keyword>
<evidence type="ECO:0000250" key="1">
    <source>
        <dbReference type="UniProtKB" id="Q9NRC1"/>
    </source>
</evidence>
<evidence type="ECO:0000255" key="2"/>
<evidence type="ECO:0000305" key="3"/>
<proteinExistence type="inferred from homology"/>
<protein>
    <recommendedName>
        <fullName>Suppressor of tumorigenicity 7 protein</fullName>
    </recommendedName>
</protein>
<gene>
    <name type="primary">ST7</name>
</gene>
<organism>
    <name type="scientific">Ovis aries</name>
    <name type="common">Sheep</name>
    <dbReference type="NCBI Taxonomy" id="9940"/>
    <lineage>
        <taxon>Eukaryota</taxon>
        <taxon>Metazoa</taxon>
        <taxon>Chordata</taxon>
        <taxon>Craniata</taxon>
        <taxon>Vertebrata</taxon>
        <taxon>Euteleostomi</taxon>
        <taxon>Mammalia</taxon>
        <taxon>Eutheria</taxon>
        <taxon>Laurasiatheria</taxon>
        <taxon>Artiodactyla</taxon>
        <taxon>Ruminantia</taxon>
        <taxon>Pecora</taxon>
        <taxon>Bovidae</taxon>
        <taxon>Caprinae</taxon>
        <taxon>Ovis</taxon>
    </lineage>
</organism>
<dbReference type="EMBL" id="DP000179">
    <property type="protein sequence ID" value="ABI75295.1"/>
    <property type="molecule type" value="Genomic_DNA"/>
</dbReference>
<dbReference type="RefSeq" id="NP_001182246.1">
    <property type="nucleotide sequence ID" value="NM_001195317.1"/>
</dbReference>
<dbReference type="STRING" id="9940.ENSOARP00000020505"/>
<dbReference type="GlyCosmos" id="Q09YI5">
    <property type="glycosylation" value="1 site, No reported glycans"/>
</dbReference>
<dbReference type="PaxDb" id="9940-ENSOARP00000020505"/>
<dbReference type="Ensembl" id="ENSOART00040009042">
    <property type="protein sequence ID" value="ENSOARP00040004698"/>
    <property type="gene ID" value="ENSOARG00040005367"/>
</dbReference>
<dbReference type="Ensembl" id="ENSOART00180001846">
    <property type="protein sequence ID" value="ENSOARP00180000959"/>
    <property type="gene ID" value="ENSOARG00180001112"/>
</dbReference>
<dbReference type="Ensembl" id="ENSOART00185001067">
    <property type="protein sequence ID" value="ENSOARP00185000429"/>
    <property type="gene ID" value="ENSOARG00185000699"/>
</dbReference>
<dbReference type="Ensembl" id="ENSOART00215018153">
    <property type="protein sequence ID" value="ENSOARP00215008966"/>
    <property type="gene ID" value="ENSOARG00215010858"/>
</dbReference>
<dbReference type="Ensembl" id="ENSOART00220066548">
    <property type="protein sequence ID" value="ENSOARP00220035595"/>
    <property type="gene ID" value="ENSOARG00220039969"/>
</dbReference>
<dbReference type="Ensembl" id="ENSOART00225027498">
    <property type="protein sequence ID" value="ENSOARP00225013345"/>
    <property type="gene ID" value="ENSOARG00225016767"/>
</dbReference>
<dbReference type="Ensembl" id="ENSOART00260012090">
    <property type="protein sequence ID" value="ENSOARP00260005821"/>
    <property type="gene ID" value="ENSOARG00260007524"/>
</dbReference>
<dbReference type="GeneID" id="100126576"/>
<dbReference type="KEGG" id="oas:100126576"/>
<dbReference type="CTD" id="7982"/>
<dbReference type="eggNOG" id="KOG3807">
    <property type="taxonomic scope" value="Eukaryota"/>
</dbReference>
<dbReference type="OrthoDB" id="5914722at2759"/>
<dbReference type="Proteomes" id="UP000002356">
    <property type="component" value="Unplaced"/>
</dbReference>
<dbReference type="GO" id="GO:0016020">
    <property type="term" value="C:membrane"/>
    <property type="evidence" value="ECO:0007669"/>
    <property type="project" value="UniProtKB-SubCell"/>
</dbReference>
<dbReference type="CDD" id="cd11557">
    <property type="entry name" value="ST7"/>
    <property type="match status" value="1"/>
</dbReference>
<dbReference type="InterPro" id="IPR007311">
    <property type="entry name" value="ST7"/>
</dbReference>
<dbReference type="PANTHER" id="PTHR12745">
    <property type="entry name" value="SUPPRESSION OF TUMORIGENICITY 7"/>
    <property type="match status" value="1"/>
</dbReference>
<dbReference type="PANTHER" id="PTHR12745:SF10">
    <property type="entry name" value="SUPPRESSOR OF TUMORIGENICITY 7 PROTEIN"/>
    <property type="match status" value="1"/>
</dbReference>
<dbReference type="Pfam" id="PF04184">
    <property type="entry name" value="ST7"/>
    <property type="match status" value="1"/>
</dbReference>
<feature type="chain" id="PRO_0000339218" description="Suppressor of tumorigenicity 7 protein">
    <location>
        <begin position="1"/>
        <end position="585"/>
    </location>
</feature>
<feature type="transmembrane region" description="Helical" evidence="2">
    <location>
        <begin position="15"/>
        <end position="35"/>
    </location>
</feature>
<feature type="transmembrane region" description="Helical" evidence="2">
    <location>
        <begin position="62"/>
        <end position="82"/>
    </location>
</feature>
<feature type="transmembrane region" description="Helical" evidence="2">
    <location>
        <begin position="512"/>
        <end position="532"/>
    </location>
</feature>
<feature type="modified residue" description="Phosphoserine" evidence="1">
    <location>
        <position position="386"/>
    </location>
</feature>
<feature type="glycosylation site" description="N-linked (GlcNAc...) asparagine" evidence="2">
    <location>
        <position position="47"/>
    </location>
</feature>
<sequence length="585" mass="67119">MAEAGTGFLEQLKSCIVWSWTYLWTVWFFIVLFLVYILRVPLKINDNLSTVSMFLNTLTPKFYVALTGTSSLISGLILIFEWWYFRKYGTSFIEQVSVSHLRPLLGGVDNNSSNNSNSSNGDSDSNRQSVSECKVWRNPLNLFRGAEYNRYTWVTGREPLTYYDMNLSAQDHQTFFTCDSDHLRPADAIMQKAWRERNPQARISAAHEALEINEIRSRVEVPLIASSTIWEIKLLPKCATAYILLAEEEATTIAEAEKLFKQALKAGDGCYRRSQQLQHHGSQYEAQHRRDTNVLVYIKRRLAMCARRLGRTREAVKMMRDLMKEFPLLSMFNIHENLLEALLELQAYADVQAVLAKYDDISLPKSATICYTAALLKARAVSDKFSPEAASRRGLSTAEMNAVEAIHRAVEFNPHVPKYLLEMKSLILPPEHILKRGDSEAIAYAFFHLAHWKRVEGALNLLHCTWEGTFRMIPYPLEKGHLFYPYPICTETADRELLPSFHEVSVYPKKELPFFILFTAGLCSFTAMLALLTHQFPELMGVFAKAMIDIFCSAELRDWNCESIFMRVEDELEIPPAPQSQHFQN</sequence>